<organism>
    <name type="scientific">Saccharopolyspora erythraea (strain ATCC 11635 / DSM 40517 / JCM 4748 / NBRC 13426 / NCIMB 8594 / NRRL 2338)</name>
    <dbReference type="NCBI Taxonomy" id="405948"/>
    <lineage>
        <taxon>Bacteria</taxon>
        <taxon>Bacillati</taxon>
        <taxon>Actinomycetota</taxon>
        <taxon>Actinomycetes</taxon>
        <taxon>Pseudonocardiales</taxon>
        <taxon>Pseudonocardiaceae</taxon>
        <taxon>Saccharopolyspora</taxon>
    </lineage>
</organism>
<evidence type="ECO:0000255" key="1">
    <source>
        <dbReference type="HAMAP-Rule" id="MF_01681"/>
    </source>
</evidence>
<keyword id="KW-0028">Amino-acid biosynthesis</keyword>
<keyword id="KW-0378">Hydrolase</keyword>
<keyword id="KW-0460">Magnesium</keyword>
<keyword id="KW-0479">Metal-binding</keyword>
<keyword id="KW-0486">Methionine biosynthesis</keyword>
<keyword id="KW-1185">Reference proteome</keyword>
<accession>A4FFQ6</accession>
<reference key="1">
    <citation type="journal article" date="2007" name="Nat. Biotechnol.">
        <title>Complete genome sequence of the erythromycin-producing bacterium Saccharopolyspora erythraea NRRL23338.</title>
        <authorList>
            <person name="Oliynyk M."/>
            <person name="Samborskyy M."/>
            <person name="Lester J.B."/>
            <person name="Mironenko T."/>
            <person name="Scott N."/>
            <person name="Dickens S."/>
            <person name="Haydock S.F."/>
            <person name="Leadlay P.F."/>
        </authorList>
    </citation>
    <scope>NUCLEOTIDE SEQUENCE [LARGE SCALE GENOMIC DNA]</scope>
    <source>
        <strain>ATCC 11635 / DSM 40517 / JCM 4748 / NBRC 13426 / NCIMB 8594 / NRRL 2338</strain>
    </source>
</reference>
<proteinExistence type="inferred from homology"/>
<name>MTNC_SACEN</name>
<gene>
    <name evidence="1" type="primary">mtnC</name>
    <name type="ordered locus">SACE_3607</name>
</gene>
<feature type="chain" id="PRO_0000357394" description="Enolase-phosphatase E1">
    <location>
        <begin position="1"/>
        <end position="240"/>
    </location>
</feature>
<dbReference type="EC" id="3.1.3.77" evidence="1"/>
<dbReference type="EMBL" id="AM420293">
    <property type="protein sequence ID" value="CAM02881.1"/>
    <property type="molecule type" value="Genomic_DNA"/>
</dbReference>
<dbReference type="RefSeq" id="WP_009949019.1">
    <property type="nucleotide sequence ID" value="NC_009142.1"/>
</dbReference>
<dbReference type="SMR" id="A4FFQ6"/>
<dbReference type="STRING" id="405948.SACE_3607"/>
<dbReference type="KEGG" id="sen:SACE_3607"/>
<dbReference type="eggNOG" id="COG4229">
    <property type="taxonomic scope" value="Bacteria"/>
</dbReference>
<dbReference type="HOGENOM" id="CLU_023273_0_0_11"/>
<dbReference type="OrthoDB" id="9797416at2"/>
<dbReference type="UniPathway" id="UPA00904">
    <property type="reaction ID" value="UER00876"/>
</dbReference>
<dbReference type="UniPathway" id="UPA00904">
    <property type="reaction ID" value="UER00877"/>
</dbReference>
<dbReference type="Proteomes" id="UP000006728">
    <property type="component" value="Chromosome"/>
</dbReference>
<dbReference type="GO" id="GO:0043715">
    <property type="term" value="F:2,3-diketo-5-methylthiopentyl-1-phosphate enolase activity"/>
    <property type="evidence" value="ECO:0007669"/>
    <property type="project" value="UniProtKB-UniRule"/>
</dbReference>
<dbReference type="GO" id="GO:0043716">
    <property type="term" value="F:2-hydroxy-3-keto-5-methylthiopentenyl-1-phosphate phosphatase activity"/>
    <property type="evidence" value="ECO:0007669"/>
    <property type="project" value="UniProtKB-UniRule"/>
</dbReference>
<dbReference type="GO" id="GO:0043874">
    <property type="term" value="F:acireductone synthase activity"/>
    <property type="evidence" value="ECO:0007669"/>
    <property type="project" value="UniProtKB-EC"/>
</dbReference>
<dbReference type="GO" id="GO:0000287">
    <property type="term" value="F:magnesium ion binding"/>
    <property type="evidence" value="ECO:0007669"/>
    <property type="project" value="UniProtKB-UniRule"/>
</dbReference>
<dbReference type="GO" id="GO:0019509">
    <property type="term" value="P:L-methionine salvage from methylthioadenosine"/>
    <property type="evidence" value="ECO:0007669"/>
    <property type="project" value="UniProtKB-UniRule"/>
</dbReference>
<dbReference type="CDD" id="cd01629">
    <property type="entry name" value="HAD_EP"/>
    <property type="match status" value="1"/>
</dbReference>
<dbReference type="Gene3D" id="1.10.720.60">
    <property type="match status" value="1"/>
</dbReference>
<dbReference type="Gene3D" id="3.40.50.1000">
    <property type="entry name" value="HAD superfamily/HAD-like"/>
    <property type="match status" value="1"/>
</dbReference>
<dbReference type="HAMAP" id="MF_01681">
    <property type="entry name" value="Salvage_MtnC"/>
    <property type="match status" value="1"/>
</dbReference>
<dbReference type="InterPro" id="IPR023943">
    <property type="entry name" value="Enolase-ppase_E1"/>
</dbReference>
<dbReference type="InterPro" id="IPR036412">
    <property type="entry name" value="HAD-like_sf"/>
</dbReference>
<dbReference type="InterPro" id="IPR023214">
    <property type="entry name" value="HAD_sf"/>
</dbReference>
<dbReference type="NCBIfam" id="TIGR01691">
    <property type="entry name" value="enolase-ppase"/>
    <property type="match status" value="1"/>
</dbReference>
<dbReference type="PANTHER" id="PTHR20371">
    <property type="entry name" value="ENOLASE-PHOSPHATASE E1"/>
    <property type="match status" value="1"/>
</dbReference>
<dbReference type="PANTHER" id="PTHR20371:SF1">
    <property type="entry name" value="ENOLASE-PHOSPHATASE E1"/>
    <property type="match status" value="1"/>
</dbReference>
<dbReference type="Pfam" id="PF00702">
    <property type="entry name" value="Hydrolase"/>
    <property type="match status" value="1"/>
</dbReference>
<dbReference type="SFLD" id="SFLDG01133">
    <property type="entry name" value="C1.5.4:_Enolase-phosphatase_Li"/>
    <property type="match status" value="1"/>
</dbReference>
<dbReference type="SFLD" id="SFLDG01129">
    <property type="entry name" value="C1.5:_HAD__Beta-PGM__Phosphata"/>
    <property type="match status" value="1"/>
</dbReference>
<dbReference type="SUPFAM" id="SSF56784">
    <property type="entry name" value="HAD-like"/>
    <property type="match status" value="1"/>
</dbReference>
<sequence>MSASVAARWVVLDIEGTLTPTSQVHVVLYDYARPRLGPWIHDHPEDPVVRKAVEDVKSEAGLPAEATAEQVVAVLHGWMDADRKAAPLKTLQGLIWQDGYARGELTTDYFADVVPALRAWRQRGLVLAVFSSGSVAGQVASFSHTTSGDLRGLFAQHFDTVNAGPKRERGSYEAIAAALGAARPLQIVFLSDVPAELDAAAQAGWHTVGLARPGEPYADADFGSHPAVGAFDDIDIEVVS</sequence>
<comment type="function">
    <text evidence="1">Bifunctional enzyme that catalyzes the enolization of 2,3-diketo-5-methylthiopentyl-1-phosphate (DK-MTP-1-P) into the intermediate 2-hydroxy-3-keto-5-methylthiopentenyl-1-phosphate (HK-MTPenyl-1-P), which is then dephosphorylated to form the acireductone 1,2-dihydroxy-3-keto-5-methylthiopentene (DHK-MTPene).</text>
</comment>
<comment type="catalytic activity">
    <reaction evidence="1">
        <text>5-methylsulfanyl-2,3-dioxopentyl phosphate + H2O = 1,2-dihydroxy-5-(methylsulfanyl)pent-1-en-3-one + phosphate</text>
        <dbReference type="Rhea" id="RHEA:21700"/>
        <dbReference type="ChEBI" id="CHEBI:15377"/>
        <dbReference type="ChEBI" id="CHEBI:43474"/>
        <dbReference type="ChEBI" id="CHEBI:49252"/>
        <dbReference type="ChEBI" id="CHEBI:58828"/>
        <dbReference type="EC" id="3.1.3.77"/>
    </reaction>
</comment>
<comment type="cofactor">
    <cofactor evidence="1">
        <name>Mg(2+)</name>
        <dbReference type="ChEBI" id="CHEBI:18420"/>
    </cofactor>
    <text evidence="1">Binds 1 Mg(2+) ion per subunit.</text>
</comment>
<comment type="pathway">
    <text evidence="1">Amino-acid biosynthesis; L-methionine biosynthesis via salvage pathway; L-methionine from S-methyl-5-thio-alpha-D-ribose 1-phosphate: step 3/6.</text>
</comment>
<comment type="pathway">
    <text evidence="1">Amino-acid biosynthesis; L-methionine biosynthesis via salvage pathway; L-methionine from S-methyl-5-thio-alpha-D-ribose 1-phosphate: step 4/6.</text>
</comment>
<comment type="subunit">
    <text evidence="1">Monomer.</text>
</comment>
<comment type="similarity">
    <text evidence="1">Belongs to the HAD-like hydrolase superfamily. MasA/MtnC family.</text>
</comment>
<protein>
    <recommendedName>
        <fullName evidence="1">Enolase-phosphatase E1</fullName>
        <ecNumber evidence="1">3.1.3.77</ecNumber>
    </recommendedName>
    <alternativeName>
        <fullName evidence="1">2,3-diketo-5-methylthio-1-phosphopentane phosphatase</fullName>
    </alternativeName>
</protein>